<organism>
    <name type="scientific">Staphylococcus aureus (strain Mu50 / ATCC 700699)</name>
    <dbReference type="NCBI Taxonomy" id="158878"/>
    <lineage>
        <taxon>Bacteria</taxon>
        <taxon>Bacillati</taxon>
        <taxon>Bacillota</taxon>
        <taxon>Bacilli</taxon>
        <taxon>Bacillales</taxon>
        <taxon>Staphylococcaceae</taxon>
        <taxon>Staphylococcus</taxon>
    </lineage>
</organism>
<evidence type="ECO:0000255" key="1">
    <source>
        <dbReference type="HAMAP-Rule" id="MF_01684"/>
    </source>
</evidence>
<evidence type="ECO:0007829" key="2">
    <source>
        <dbReference type="PDB" id="3BL6"/>
    </source>
</evidence>
<comment type="function">
    <text evidence="1">Catalyzes the irreversible cleavage of the glycosidic bond in both 5'-methylthioadenosine (MTA) and S-adenosylhomocysteine (SAH/AdoHcy) to adenine and the corresponding thioribose, 5'-methylthioribose and S-ribosylhomocysteine, respectively. Also cleaves 5'-deoxyadenosine, a toxic by-product of radical S-adenosylmethionine (SAM) enzymes, into 5-deoxyribose and adenine.</text>
</comment>
<comment type="catalytic activity">
    <reaction evidence="1">
        <text>S-adenosyl-L-homocysteine + H2O = S-(5-deoxy-D-ribos-5-yl)-L-homocysteine + adenine</text>
        <dbReference type="Rhea" id="RHEA:17805"/>
        <dbReference type="ChEBI" id="CHEBI:15377"/>
        <dbReference type="ChEBI" id="CHEBI:16708"/>
        <dbReference type="ChEBI" id="CHEBI:57856"/>
        <dbReference type="ChEBI" id="CHEBI:58195"/>
        <dbReference type="EC" id="3.2.2.9"/>
    </reaction>
</comment>
<comment type="catalytic activity">
    <reaction evidence="1">
        <text>S-methyl-5'-thioadenosine + H2O = 5-(methylsulfanyl)-D-ribose + adenine</text>
        <dbReference type="Rhea" id="RHEA:13617"/>
        <dbReference type="ChEBI" id="CHEBI:15377"/>
        <dbReference type="ChEBI" id="CHEBI:16708"/>
        <dbReference type="ChEBI" id="CHEBI:17509"/>
        <dbReference type="ChEBI" id="CHEBI:78440"/>
        <dbReference type="EC" id="3.2.2.9"/>
    </reaction>
</comment>
<comment type="catalytic activity">
    <reaction evidence="1">
        <text>5'-deoxyadenosine + H2O = 5-deoxy-D-ribose + adenine</text>
        <dbReference type="Rhea" id="RHEA:29859"/>
        <dbReference type="ChEBI" id="CHEBI:15377"/>
        <dbReference type="ChEBI" id="CHEBI:16708"/>
        <dbReference type="ChEBI" id="CHEBI:17319"/>
        <dbReference type="ChEBI" id="CHEBI:149540"/>
        <dbReference type="EC" id="3.2.2.9"/>
    </reaction>
    <physiologicalReaction direction="left-to-right" evidence="1">
        <dbReference type="Rhea" id="RHEA:29860"/>
    </physiologicalReaction>
</comment>
<comment type="pathway">
    <text evidence="1">Amino-acid biosynthesis; L-methionine biosynthesis via salvage pathway; S-methyl-5-thio-alpha-D-ribose 1-phosphate from S-methyl-5'-thioadenosine (hydrolase route): step 1/2.</text>
</comment>
<comment type="similarity">
    <text evidence="1">Belongs to the PNP/UDP phosphorylase family. MtnN subfamily.</text>
</comment>
<reference key="1">
    <citation type="journal article" date="2001" name="Lancet">
        <title>Whole genome sequencing of meticillin-resistant Staphylococcus aureus.</title>
        <authorList>
            <person name="Kuroda M."/>
            <person name="Ohta T."/>
            <person name="Uchiyama I."/>
            <person name="Baba T."/>
            <person name="Yuzawa H."/>
            <person name="Kobayashi I."/>
            <person name="Cui L."/>
            <person name="Oguchi A."/>
            <person name="Aoki K."/>
            <person name="Nagai Y."/>
            <person name="Lian J.-Q."/>
            <person name="Ito T."/>
            <person name="Kanamori M."/>
            <person name="Matsumaru H."/>
            <person name="Maruyama A."/>
            <person name="Murakami H."/>
            <person name="Hosoyama A."/>
            <person name="Mizutani-Ui Y."/>
            <person name="Takahashi N.K."/>
            <person name="Sawano T."/>
            <person name="Inoue R."/>
            <person name="Kaito C."/>
            <person name="Sekimizu K."/>
            <person name="Hirakawa H."/>
            <person name="Kuhara S."/>
            <person name="Goto S."/>
            <person name="Yabuzaki J."/>
            <person name="Kanehisa M."/>
            <person name="Yamashita A."/>
            <person name="Oshima K."/>
            <person name="Furuya K."/>
            <person name="Yoshino C."/>
            <person name="Shiba T."/>
            <person name="Hattori M."/>
            <person name="Ogasawara N."/>
            <person name="Hayashi H."/>
            <person name="Hiramatsu K."/>
        </authorList>
    </citation>
    <scope>NUCLEOTIDE SEQUENCE [LARGE SCALE GENOMIC DNA]</scope>
    <source>
        <strain>Mu50 / ATCC 700699</strain>
    </source>
</reference>
<accession>Q99TQ0</accession>
<name>MTNN_STAAM</name>
<proteinExistence type="evidence at protein level"/>
<gene>
    <name evidence="1" type="primary">mtnN</name>
    <name type="ordered locus">SAV1599</name>
</gene>
<keyword id="KW-0002">3D-structure</keyword>
<keyword id="KW-0028">Amino-acid biosynthesis</keyword>
<keyword id="KW-0378">Hydrolase</keyword>
<keyword id="KW-0486">Methionine biosynthesis</keyword>
<feature type="chain" id="PRO_0000359369" description="5'-methylthioadenosine/S-adenosylhomocysteine nucleosidase">
    <location>
        <begin position="1"/>
        <end position="228"/>
    </location>
</feature>
<feature type="active site" description="Proton acceptor" evidence="1">
    <location>
        <position position="11"/>
    </location>
</feature>
<feature type="active site" description="Proton donor" evidence="1">
    <location>
        <position position="196"/>
    </location>
</feature>
<feature type="binding site" evidence="1">
    <location>
        <position position="77"/>
    </location>
    <ligand>
        <name>substrate</name>
    </ligand>
</feature>
<feature type="binding site" evidence="1">
    <location>
        <position position="151"/>
    </location>
    <ligand>
        <name>substrate</name>
    </ligand>
</feature>
<feature type="binding site" evidence="1">
    <location>
        <begin position="172"/>
        <end position="173"/>
    </location>
    <ligand>
        <name>substrate</name>
    </ligand>
</feature>
<feature type="strand" evidence="2">
    <location>
        <begin position="1"/>
        <end position="8"/>
    </location>
</feature>
<feature type="helix" evidence="2">
    <location>
        <begin position="9"/>
        <end position="16"/>
    </location>
</feature>
<feature type="strand" evidence="2">
    <location>
        <begin position="20"/>
        <end position="27"/>
    </location>
</feature>
<feature type="strand" evidence="2">
    <location>
        <begin position="30"/>
        <end position="37"/>
    </location>
</feature>
<feature type="strand" evidence="2">
    <location>
        <begin position="40"/>
        <end position="46"/>
    </location>
</feature>
<feature type="helix" evidence="2">
    <location>
        <begin position="51"/>
        <end position="65"/>
    </location>
</feature>
<feature type="strand" evidence="2">
    <location>
        <begin position="68"/>
        <end position="72"/>
    </location>
</feature>
<feature type="strand" evidence="2">
    <location>
        <begin position="74"/>
        <end position="78"/>
    </location>
</feature>
<feature type="strand" evidence="2">
    <location>
        <begin position="88"/>
        <end position="98"/>
    </location>
</feature>
<feature type="helix" evidence="2">
    <location>
        <begin position="102"/>
        <end position="104"/>
    </location>
</feature>
<feature type="strand" evidence="2">
    <location>
        <begin position="116"/>
        <end position="119"/>
    </location>
</feature>
<feature type="helix" evidence="2">
    <location>
        <begin position="122"/>
        <end position="134"/>
    </location>
</feature>
<feature type="strand" evidence="2">
    <location>
        <begin position="139"/>
        <end position="146"/>
    </location>
</feature>
<feature type="helix" evidence="2">
    <location>
        <begin position="154"/>
        <end position="163"/>
    </location>
</feature>
<feature type="strand" evidence="2">
    <location>
        <begin position="167"/>
        <end position="173"/>
    </location>
</feature>
<feature type="helix" evidence="2">
    <location>
        <begin position="174"/>
        <end position="184"/>
    </location>
</feature>
<feature type="strand" evidence="2">
    <location>
        <begin position="188"/>
        <end position="196"/>
    </location>
</feature>
<feature type="helix" evidence="2">
    <location>
        <begin position="202"/>
        <end position="225"/>
    </location>
</feature>
<sequence length="228" mass="24534">MIGIIGAMEEEVTILKNKLTQLSEISVAHVKFYTGILKDREVVITQSGIGKVNAAISTTLLINKFKPDVIINTGSAGALDESLNVGDVLISDDVKYHDADATAFGYEYGQIPQMPVAFQSSKPLIEKVSQVVQQQQLTAKVGLIVSGDSFIGSVEQRQKIKKAFPNAMAVEMEATAIAQTCYQFNVPFVVVRAVSDLANGEAEMSFEAFLEKAAVSSSQTVEALVSQL</sequence>
<dbReference type="EC" id="3.2.2.9" evidence="1"/>
<dbReference type="EMBL" id="BA000017">
    <property type="protein sequence ID" value="BAB57761.1"/>
    <property type="molecule type" value="Genomic_DNA"/>
</dbReference>
<dbReference type="RefSeq" id="WP_000579275.1">
    <property type="nucleotide sequence ID" value="NC_002758.2"/>
</dbReference>
<dbReference type="PDB" id="3BL6">
    <property type="method" value="X-ray"/>
    <property type="resolution" value="1.70 A"/>
    <property type="chains" value="A=1-228"/>
</dbReference>
<dbReference type="PDB" id="4GMH">
    <property type="method" value="X-ray"/>
    <property type="resolution" value="2.00 A"/>
    <property type="chains" value="A=1-228"/>
</dbReference>
<dbReference type="PDBsum" id="3BL6"/>
<dbReference type="PDBsum" id="4GMH"/>
<dbReference type="SMR" id="Q99TQ0"/>
<dbReference type="KEGG" id="sav:SAV1599"/>
<dbReference type="HOGENOM" id="CLU_031248_2_2_9"/>
<dbReference type="PhylomeDB" id="Q99TQ0"/>
<dbReference type="BRENDA" id="3.2.2.16">
    <property type="organism ID" value="3352"/>
</dbReference>
<dbReference type="BRENDA" id="3.2.2.9">
    <property type="organism ID" value="3352"/>
</dbReference>
<dbReference type="UniPathway" id="UPA00904">
    <property type="reaction ID" value="UER00871"/>
</dbReference>
<dbReference type="EvolutionaryTrace" id="Q99TQ0"/>
<dbReference type="Proteomes" id="UP000002481">
    <property type="component" value="Chromosome"/>
</dbReference>
<dbReference type="GO" id="GO:0005829">
    <property type="term" value="C:cytosol"/>
    <property type="evidence" value="ECO:0007669"/>
    <property type="project" value="TreeGrafter"/>
</dbReference>
<dbReference type="GO" id="GO:0008782">
    <property type="term" value="F:adenosylhomocysteine nucleosidase activity"/>
    <property type="evidence" value="ECO:0007669"/>
    <property type="project" value="UniProtKB-UniRule"/>
</dbReference>
<dbReference type="GO" id="GO:0008930">
    <property type="term" value="F:methylthioadenosine nucleosidase activity"/>
    <property type="evidence" value="ECO:0007669"/>
    <property type="project" value="UniProtKB-UniRule"/>
</dbReference>
<dbReference type="GO" id="GO:0019509">
    <property type="term" value="P:L-methionine salvage from methylthioadenosine"/>
    <property type="evidence" value="ECO:0007669"/>
    <property type="project" value="UniProtKB-UniRule"/>
</dbReference>
<dbReference type="GO" id="GO:0019284">
    <property type="term" value="P:L-methionine salvage from S-adenosylmethionine"/>
    <property type="evidence" value="ECO:0007669"/>
    <property type="project" value="TreeGrafter"/>
</dbReference>
<dbReference type="GO" id="GO:0009164">
    <property type="term" value="P:nucleoside catabolic process"/>
    <property type="evidence" value="ECO:0007669"/>
    <property type="project" value="InterPro"/>
</dbReference>
<dbReference type="CDD" id="cd09008">
    <property type="entry name" value="MTAN"/>
    <property type="match status" value="1"/>
</dbReference>
<dbReference type="FunFam" id="3.40.50.1580:FF:000001">
    <property type="entry name" value="MTA/SAH nucleosidase family protein"/>
    <property type="match status" value="1"/>
</dbReference>
<dbReference type="Gene3D" id="3.40.50.1580">
    <property type="entry name" value="Nucleoside phosphorylase domain"/>
    <property type="match status" value="1"/>
</dbReference>
<dbReference type="HAMAP" id="MF_01684">
    <property type="entry name" value="Salvage_MtnN"/>
    <property type="match status" value="1"/>
</dbReference>
<dbReference type="InterPro" id="IPR010049">
    <property type="entry name" value="MTA_SAH_Nsdase"/>
</dbReference>
<dbReference type="InterPro" id="IPR000845">
    <property type="entry name" value="Nucleoside_phosphorylase_d"/>
</dbReference>
<dbReference type="InterPro" id="IPR035994">
    <property type="entry name" value="Nucleoside_phosphorylase_sf"/>
</dbReference>
<dbReference type="NCBIfam" id="TIGR01704">
    <property type="entry name" value="MTA_SAH-Nsdase"/>
    <property type="match status" value="1"/>
</dbReference>
<dbReference type="NCBIfam" id="NF004079">
    <property type="entry name" value="PRK05584.1"/>
    <property type="match status" value="1"/>
</dbReference>
<dbReference type="PANTHER" id="PTHR46832">
    <property type="entry name" value="5'-METHYLTHIOADENOSINE/S-ADENOSYLHOMOCYSTEINE NUCLEOSIDASE"/>
    <property type="match status" value="1"/>
</dbReference>
<dbReference type="PANTHER" id="PTHR46832:SF1">
    <property type="entry name" value="5'-METHYLTHIOADENOSINE_S-ADENOSYLHOMOCYSTEINE NUCLEOSIDASE"/>
    <property type="match status" value="1"/>
</dbReference>
<dbReference type="Pfam" id="PF01048">
    <property type="entry name" value="PNP_UDP_1"/>
    <property type="match status" value="1"/>
</dbReference>
<dbReference type="SUPFAM" id="SSF53167">
    <property type="entry name" value="Purine and uridine phosphorylases"/>
    <property type="match status" value="1"/>
</dbReference>
<protein>
    <recommendedName>
        <fullName evidence="1">5'-methylthioadenosine/S-adenosylhomocysteine nucleosidase</fullName>
        <shortName evidence="1">MTA/SAH nucleosidase</shortName>
        <shortName evidence="1">MTAN</shortName>
        <ecNumber evidence="1">3.2.2.9</ecNumber>
    </recommendedName>
    <alternativeName>
        <fullName evidence="1">5'-deoxyadenosine nucleosidase</fullName>
        <shortName evidence="1">DOA nucleosidase</shortName>
        <shortName evidence="1">dAdo nucleosidase</shortName>
    </alternativeName>
    <alternativeName>
        <fullName evidence="1">5'-methylthioadenosine nucleosidase</fullName>
        <shortName evidence="1">MTA nucleosidase</shortName>
    </alternativeName>
    <alternativeName>
        <fullName evidence="1">S-adenosylhomocysteine nucleosidase</fullName>
        <shortName evidence="1">AdoHcy nucleosidase</shortName>
        <shortName evidence="1">SAH nucleosidase</shortName>
        <shortName evidence="1">SRH nucleosidase</shortName>
    </alternativeName>
</protein>